<feature type="chain" id="PRO_0000330311" description="Taperin">
    <location>
        <begin position="1"/>
        <end position="753"/>
    </location>
</feature>
<feature type="region of interest" description="Disordered" evidence="3">
    <location>
        <begin position="141"/>
        <end position="348"/>
    </location>
</feature>
<feature type="region of interest" description="Disordered" evidence="3">
    <location>
        <begin position="438"/>
        <end position="488"/>
    </location>
</feature>
<feature type="region of interest" description="Disordered" evidence="3">
    <location>
        <begin position="544"/>
        <end position="583"/>
    </location>
</feature>
<feature type="region of interest" description="Disordered" evidence="3">
    <location>
        <begin position="637"/>
        <end position="676"/>
    </location>
</feature>
<feature type="compositionally biased region" description="Pro residues" evidence="3">
    <location>
        <begin position="182"/>
        <end position="197"/>
    </location>
</feature>
<feature type="compositionally biased region" description="Polar residues" evidence="3">
    <location>
        <begin position="230"/>
        <end position="239"/>
    </location>
</feature>
<feature type="compositionally biased region" description="Polar residues" evidence="3">
    <location>
        <begin position="250"/>
        <end position="263"/>
    </location>
</feature>
<feature type="compositionally biased region" description="Low complexity" evidence="3">
    <location>
        <begin position="300"/>
        <end position="322"/>
    </location>
</feature>
<feature type="compositionally biased region" description="Polar residues" evidence="3">
    <location>
        <begin position="323"/>
        <end position="335"/>
    </location>
</feature>
<feature type="compositionally biased region" description="Basic and acidic residues" evidence="3">
    <location>
        <begin position="337"/>
        <end position="347"/>
    </location>
</feature>
<feature type="compositionally biased region" description="Polar residues" evidence="3">
    <location>
        <begin position="559"/>
        <end position="571"/>
    </location>
</feature>
<feature type="compositionally biased region" description="Acidic residues" evidence="3">
    <location>
        <begin position="648"/>
        <end position="672"/>
    </location>
</feature>
<feature type="modified residue" description="Phosphoserine" evidence="5">
    <location>
        <position position="274"/>
    </location>
</feature>
<feature type="modified residue" description="Phosphoserine" evidence="2">
    <location>
        <position position="402"/>
    </location>
</feature>
<feature type="modified residue" description="Phosphoserine" evidence="5">
    <location>
        <position position="458"/>
    </location>
</feature>
<feature type="modified residue" description="Phosphoserine" evidence="1">
    <location>
        <position position="502"/>
    </location>
</feature>
<organism>
    <name type="scientific">Rattus norvegicus</name>
    <name type="common">Rat</name>
    <dbReference type="NCBI Taxonomy" id="10116"/>
    <lineage>
        <taxon>Eukaryota</taxon>
        <taxon>Metazoa</taxon>
        <taxon>Chordata</taxon>
        <taxon>Craniata</taxon>
        <taxon>Vertebrata</taxon>
        <taxon>Euteleostomi</taxon>
        <taxon>Mammalia</taxon>
        <taxon>Eutheria</taxon>
        <taxon>Euarchontoglires</taxon>
        <taxon>Glires</taxon>
        <taxon>Rodentia</taxon>
        <taxon>Myomorpha</taxon>
        <taxon>Muroidea</taxon>
        <taxon>Muridae</taxon>
        <taxon>Murinae</taxon>
        <taxon>Rattus</taxon>
    </lineage>
</organism>
<comment type="function">
    <text evidence="1 2">Essential for hearing (By similarity). Required for maintenance of stereocilia on both inner and outer hair cells (By similarity). Necessary for the integrity of the stereociliary rootlet (By similarity). May act as an actin cytoskeleton regulator involved in the regulation of actin dynamics at the pointed end in hair cells (By similarity). Forms rings at the base of stereocilia and binds actin filaments in the stereocilia which may stabilize the stereocilia (By similarity). Acts as a strong inhibitor of PPP1CA phosphatase activity (By similarity). Recruited to sites of DNA damage and may play a role in DNA damage repair (By similarity).</text>
</comment>
<comment type="subunit">
    <text evidence="1 2">Interacts with GRXCR2; the interaction restricts TPRN to the stereocilum basal region (By similarity). Interacts with actin ACTB; the interaction may stabilize stereocilia (By similarity). Interacts with CLIC5 (By similarity). Interacts with PTPRQ (By similarity). TPRN, CLIC5 and PTPQR form concentric rings at the base of stereocilia and may form a complex (By similarity). Interacts with phosphatase PPP1CA; the interaction results in inhibition of PPC1A phosphatase activity (By similarity). Interacts with DNA damage response proteins XRCC6/KU70, XRCC5/KU80, PARP1, TOP1 and TOP2A; these interactions recruit TPRN to sites of DNA damage where it may play a role in DNA repair (By similarity).</text>
</comment>
<comment type="subcellular location">
    <subcellularLocation>
        <location evidence="1">Cell projection</location>
        <location evidence="1">Stereocilium</location>
    </subcellularLocation>
    <subcellularLocation>
        <location evidence="1">Cell projection</location>
        <location evidence="1">Microvillus</location>
    </subcellularLocation>
    <subcellularLocation>
        <location evidence="2">Nucleus</location>
        <location evidence="2">Nucleoplasm</location>
    </subcellularLocation>
    <subcellularLocation>
        <location evidence="2">Cytoplasm</location>
    </subcellularLocation>
    <text evidence="1 2">Localized prominently at the basal taper region of hair cell stereocilia (By similarity). Forms organized ring-like structures with diameters ranging from 150 to 200 nm in the stereocilium taper region (By similarity). Detected in microvilli of inner hair cell supporting cells (By similarity). Predominantly nuclear in non-stereocilium cells but can shuttle between the nucleus and the cytoplasm (By similarity).</text>
</comment>
<comment type="similarity">
    <text evidence="4">Belongs to the taperin family.</text>
</comment>
<comment type="sequence caution" evidence="4">
    <conflict type="erroneous initiation">
        <sequence resource="EMBL-CDS" id="AAH83928"/>
    </conflict>
    <text>Truncated N-terminus.</text>
</comment>
<proteinExistence type="evidence at protein level"/>
<gene>
    <name type="primary">Tprn</name>
</gene>
<name>TPRN_RAT</name>
<keyword id="KW-0009">Actin-binding</keyword>
<keyword id="KW-0966">Cell projection</keyword>
<keyword id="KW-0963">Cytoplasm</keyword>
<keyword id="KW-1009">Hearing</keyword>
<keyword id="KW-0539">Nucleus</keyword>
<keyword id="KW-0597">Phosphoprotein</keyword>
<keyword id="KW-0650">Protein phosphatase inhibitor</keyword>
<keyword id="KW-1185">Reference proteome</keyword>
<evidence type="ECO:0000250" key="1">
    <source>
        <dbReference type="UniProtKB" id="A2AI08"/>
    </source>
</evidence>
<evidence type="ECO:0000250" key="2">
    <source>
        <dbReference type="UniProtKB" id="Q4KMQ1"/>
    </source>
</evidence>
<evidence type="ECO:0000256" key="3">
    <source>
        <dbReference type="SAM" id="MobiDB-lite"/>
    </source>
</evidence>
<evidence type="ECO:0000305" key="4"/>
<evidence type="ECO:0007744" key="5">
    <source>
    </source>
</evidence>
<protein>
    <recommendedName>
        <fullName>Taperin</fullName>
    </recommendedName>
</protein>
<reference key="1">
    <citation type="journal article" date="2004" name="Nature">
        <title>Genome sequence of the Brown Norway rat yields insights into mammalian evolution.</title>
        <authorList>
            <person name="Gibbs R.A."/>
            <person name="Weinstock G.M."/>
            <person name="Metzker M.L."/>
            <person name="Muzny D.M."/>
            <person name="Sodergren E.J."/>
            <person name="Scherer S."/>
            <person name="Scott G."/>
            <person name="Steffen D."/>
            <person name="Worley K.C."/>
            <person name="Burch P.E."/>
            <person name="Okwuonu G."/>
            <person name="Hines S."/>
            <person name="Lewis L."/>
            <person name="Deramo C."/>
            <person name="Delgado O."/>
            <person name="Dugan-Rocha S."/>
            <person name="Miner G."/>
            <person name="Morgan M."/>
            <person name="Hawes A."/>
            <person name="Gill R."/>
            <person name="Holt R.A."/>
            <person name="Adams M.D."/>
            <person name="Amanatides P.G."/>
            <person name="Baden-Tillson H."/>
            <person name="Barnstead M."/>
            <person name="Chin S."/>
            <person name="Evans C.A."/>
            <person name="Ferriera S."/>
            <person name="Fosler C."/>
            <person name="Glodek A."/>
            <person name="Gu Z."/>
            <person name="Jennings D."/>
            <person name="Kraft C.L."/>
            <person name="Nguyen T."/>
            <person name="Pfannkoch C.M."/>
            <person name="Sitter C."/>
            <person name="Sutton G.G."/>
            <person name="Venter J.C."/>
            <person name="Woodage T."/>
            <person name="Smith D."/>
            <person name="Lee H.-M."/>
            <person name="Gustafson E."/>
            <person name="Cahill P."/>
            <person name="Kana A."/>
            <person name="Doucette-Stamm L."/>
            <person name="Weinstock K."/>
            <person name="Fechtel K."/>
            <person name="Weiss R.B."/>
            <person name="Dunn D.M."/>
            <person name="Green E.D."/>
            <person name="Blakesley R.W."/>
            <person name="Bouffard G.G."/>
            <person name="De Jong P.J."/>
            <person name="Osoegawa K."/>
            <person name="Zhu B."/>
            <person name="Marra M."/>
            <person name="Schein J."/>
            <person name="Bosdet I."/>
            <person name="Fjell C."/>
            <person name="Jones S."/>
            <person name="Krzywinski M."/>
            <person name="Mathewson C."/>
            <person name="Siddiqui A."/>
            <person name="Wye N."/>
            <person name="McPherson J."/>
            <person name="Zhao S."/>
            <person name="Fraser C.M."/>
            <person name="Shetty J."/>
            <person name="Shatsman S."/>
            <person name="Geer K."/>
            <person name="Chen Y."/>
            <person name="Abramzon S."/>
            <person name="Nierman W.C."/>
            <person name="Havlak P.H."/>
            <person name="Chen R."/>
            <person name="Durbin K.J."/>
            <person name="Egan A."/>
            <person name="Ren Y."/>
            <person name="Song X.-Z."/>
            <person name="Li B."/>
            <person name="Liu Y."/>
            <person name="Qin X."/>
            <person name="Cawley S."/>
            <person name="Cooney A.J."/>
            <person name="D'Souza L.M."/>
            <person name="Martin K."/>
            <person name="Wu J.Q."/>
            <person name="Gonzalez-Garay M.L."/>
            <person name="Jackson A.R."/>
            <person name="Kalafus K.J."/>
            <person name="McLeod M.P."/>
            <person name="Milosavljevic A."/>
            <person name="Virk D."/>
            <person name="Volkov A."/>
            <person name="Wheeler D.A."/>
            <person name="Zhang Z."/>
            <person name="Bailey J.A."/>
            <person name="Eichler E.E."/>
            <person name="Tuzun E."/>
            <person name="Birney E."/>
            <person name="Mongin E."/>
            <person name="Ureta-Vidal A."/>
            <person name="Woodwark C."/>
            <person name="Zdobnov E."/>
            <person name="Bork P."/>
            <person name="Suyama M."/>
            <person name="Torrents D."/>
            <person name="Alexandersson M."/>
            <person name="Trask B.J."/>
            <person name="Young J.M."/>
            <person name="Huang H."/>
            <person name="Wang H."/>
            <person name="Xing H."/>
            <person name="Daniels S."/>
            <person name="Gietzen D."/>
            <person name="Schmidt J."/>
            <person name="Stevens K."/>
            <person name="Vitt U."/>
            <person name="Wingrove J."/>
            <person name="Camara F."/>
            <person name="Mar Alba M."/>
            <person name="Abril J.F."/>
            <person name="Guigo R."/>
            <person name="Smit A."/>
            <person name="Dubchak I."/>
            <person name="Rubin E.M."/>
            <person name="Couronne O."/>
            <person name="Poliakov A."/>
            <person name="Huebner N."/>
            <person name="Ganten D."/>
            <person name="Goesele C."/>
            <person name="Hummel O."/>
            <person name="Kreitler T."/>
            <person name="Lee Y.-A."/>
            <person name="Monti J."/>
            <person name="Schulz H."/>
            <person name="Zimdahl H."/>
            <person name="Himmelbauer H."/>
            <person name="Lehrach H."/>
            <person name="Jacob H.J."/>
            <person name="Bromberg S."/>
            <person name="Gullings-Handley J."/>
            <person name="Jensen-Seaman M.I."/>
            <person name="Kwitek A.E."/>
            <person name="Lazar J."/>
            <person name="Pasko D."/>
            <person name="Tonellato P.J."/>
            <person name="Twigger S."/>
            <person name="Ponting C.P."/>
            <person name="Duarte J.M."/>
            <person name="Rice S."/>
            <person name="Goodstadt L."/>
            <person name="Beatson S.A."/>
            <person name="Emes R.D."/>
            <person name="Winter E.E."/>
            <person name="Webber C."/>
            <person name="Brandt P."/>
            <person name="Nyakatura G."/>
            <person name="Adetobi M."/>
            <person name="Chiaromonte F."/>
            <person name="Elnitski L."/>
            <person name="Eswara P."/>
            <person name="Hardison R.C."/>
            <person name="Hou M."/>
            <person name="Kolbe D."/>
            <person name="Makova K."/>
            <person name="Miller W."/>
            <person name="Nekrutenko A."/>
            <person name="Riemer C."/>
            <person name="Schwartz S."/>
            <person name="Taylor J."/>
            <person name="Yang S."/>
            <person name="Zhang Y."/>
            <person name="Lindpaintner K."/>
            <person name="Andrews T.D."/>
            <person name="Caccamo M."/>
            <person name="Clamp M."/>
            <person name="Clarke L."/>
            <person name="Curwen V."/>
            <person name="Durbin R.M."/>
            <person name="Eyras E."/>
            <person name="Searle S.M."/>
            <person name="Cooper G.M."/>
            <person name="Batzoglou S."/>
            <person name="Brudno M."/>
            <person name="Sidow A."/>
            <person name="Stone E.A."/>
            <person name="Payseur B.A."/>
            <person name="Bourque G."/>
            <person name="Lopez-Otin C."/>
            <person name="Puente X.S."/>
            <person name="Chakrabarti K."/>
            <person name="Chatterji S."/>
            <person name="Dewey C."/>
            <person name="Pachter L."/>
            <person name="Bray N."/>
            <person name="Yap V.B."/>
            <person name="Caspi A."/>
            <person name="Tesler G."/>
            <person name="Pevzner P.A."/>
            <person name="Haussler D."/>
            <person name="Roskin K.M."/>
            <person name="Baertsch R."/>
            <person name="Clawson H."/>
            <person name="Furey T.S."/>
            <person name="Hinrichs A.S."/>
            <person name="Karolchik D."/>
            <person name="Kent W.J."/>
            <person name="Rosenbloom K.R."/>
            <person name="Trumbower H."/>
            <person name="Weirauch M."/>
            <person name="Cooper D.N."/>
            <person name="Stenson P.D."/>
            <person name="Ma B."/>
            <person name="Brent M."/>
            <person name="Arumugam M."/>
            <person name="Shteynberg D."/>
            <person name="Copley R.R."/>
            <person name="Taylor M.S."/>
            <person name="Riethman H."/>
            <person name="Mudunuri U."/>
            <person name="Peterson J."/>
            <person name="Guyer M."/>
            <person name="Felsenfeld A."/>
            <person name="Old S."/>
            <person name="Mockrin S."/>
            <person name="Collins F.S."/>
        </authorList>
    </citation>
    <scope>NUCLEOTIDE SEQUENCE [LARGE SCALE GENOMIC DNA]</scope>
    <source>
        <strain>Brown Norway</strain>
    </source>
</reference>
<reference key="2">
    <citation type="journal article" date="2004" name="Genome Res.">
        <title>The status, quality, and expansion of the NIH full-length cDNA project: the Mammalian Gene Collection (MGC).</title>
        <authorList>
            <consortium name="The MGC Project Team"/>
        </authorList>
    </citation>
    <scope>NUCLEOTIDE SEQUENCE [LARGE SCALE MRNA] OF 223-753</scope>
    <source>
        <tissue>Testis</tissue>
    </source>
</reference>
<reference key="3">
    <citation type="journal article" date="2012" name="Nat. Commun.">
        <title>Quantitative maps of protein phosphorylation sites across 14 different rat organs and tissues.</title>
        <authorList>
            <person name="Lundby A."/>
            <person name="Secher A."/>
            <person name="Lage K."/>
            <person name="Nordsborg N.B."/>
            <person name="Dmytriyev A."/>
            <person name="Lundby C."/>
            <person name="Olsen J.V."/>
        </authorList>
    </citation>
    <scope>PHOSPHORYLATION [LARGE SCALE ANALYSIS] AT SER-274 AND SER-458</scope>
    <scope>IDENTIFICATION BY MASS SPECTROMETRY [LARGE SCALE ANALYSIS]</scope>
</reference>
<dbReference type="EMBL" id="AABR03024111">
    <property type="status" value="NOT_ANNOTATED_CDS"/>
    <property type="molecule type" value="Genomic_DNA"/>
</dbReference>
<dbReference type="EMBL" id="BC083928">
    <property type="protein sequence ID" value="AAH83928.1"/>
    <property type="status" value="ALT_INIT"/>
    <property type="molecule type" value="mRNA"/>
</dbReference>
<dbReference type="RefSeq" id="NP_001019480.2">
    <property type="nucleotide sequence ID" value="NM_001024309.2"/>
</dbReference>
<dbReference type="FunCoup" id="Q5XHX2">
    <property type="interactions" value="390"/>
</dbReference>
<dbReference type="STRING" id="10116.ENSRNOP00000014489"/>
<dbReference type="GlyGen" id="Q5XHX2">
    <property type="glycosylation" value="2 sites"/>
</dbReference>
<dbReference type="iPTMnet" id="Q5XHX2"/>
<dbReference type="PhosphoSitePlus" id="Q5XHX2"/>
<dbReference type="PaxDb" id="10116-ENSRNOP00000014489"/>
<dbReference type="Ensembl" id="ENSRNOT00000014489.6">
    <property type="protein sequence ID" value="ENSRNOP00000014489.4"/>
    <property type="gene ID" value="ENSRNOG00000010896.6"/>
</dbReference>
<dbReference type="GeneID" id="499749"/>
<dbReference type="KEGG" id="rno:499749"/>
<dbReference type="UCSC" id="RGD:1562935">
    <property type="organism name" value="rat"/>
</dbReference>
<dbReference type="AGR" id="RGD:1562935"/>
<dbReference type="CTD" id="286262"/>
<dbReference type="RGD" id="1562935">
    <property type="gene designation" value="Tprn"/>
</dbReference>
<dbReference type="eggNOG" id="ENOG502RHCM">
    <property type="taxonomic scope" value="Eukaryota"/>
</dbReference>
<dbReference type="GeneTree" id="ENSGT00530000064035"/>
<dbReference type="HOGENOM" id="CLU_023685_1_0_1"/>
<dbReference type="InParanoid" id="Q5XHX2"/>
<dbReference type="OMA" id="SKWQQNG"/>
<dbReference type="OrthoDB" id="9945184at2759"/>
<dbReference type="PhylomeDB" id="Q5XHX2"/>
<dbReference type="TreeFam" id="TF333324"/>
<dbReference type="PRO" id="PR:Q5XHX2"/>
<dbReference type="Proteomes" id="UP000002494">
    <property type="component" value="Chromosome 3"/>
</dbReference>
<dbReference type="Bgee" id="ENSRNOG00000010896">
    <property type="expression patterns" value="Expressed in testis and 19 other cell types or tissues"/>
</dbReference>
<dbReference type="GO" id="GO:0005737">
    <property type="term" value="C:cytoplasm"/>
    <property type="evidence" value="ECO:0000250"/>
    <property type="project" value="UniProtKB"/>
</dbReference>
<dbReference type="GO" id="GO:0005902">
    <property type="term" value="C:microvillus"/>
    <property type="evidence" value="ECO:0000250"/>
    <property type="project" value="UniProtKB"/>
</dbReference>
<dbReference type="GO" id="GO:0005654">
    <property type="term" value="C:nucleoplasm"/>
    <property type="evidence" value="ECO:0000250"/>
    <property type="project" value="UniProtKB"/>
</dbReference>
<dbReference type="GO" id="GO:0032420">
    <property type="term" value="C:stereocilium"/>
    <property type="evidence" value="ECO:0000250"/>
    <property type="project" value="UniProtKB"/>
</dbReference>
<dbReference type="GO" id="GO:0120044">
    <property type="term" value="C:stereocilium base"/>
    <property type="evidence" value="ECO:0000250"/>
    <property type="project" value="UniProtKB"/>
</dbReference>
<dbReference type="GO" id="GO:0003779">
    <property type="term" value="F:actin binding"/>
    <property type="evidence" value="ECO:0000250"/>
    <property type="project" value="UniProtKB"/>
</dbReference>
<dbReference type="GO" id="GO:0008157">
    <property type="term" value="F:protein phosphatase 1 binding"/>
    <property type="evidence" value="ECO:0000250"/>
    <property type="project" value="UniProtKB"/>
</dbReference>
<dbReference type="GO" id="GO:0019903">
    <property type="term" value="F:protein phosphatase binding"/>
    <property type="evidence" value="ECO:0000250"/>
    <property type="project" value="UniProtKB"/>
</dbReference>
<dbReference type="GO" id="GO:0004865">
    <property type="term" value="F:protein serine/threonine phosphatase inhibitor activity"/>
    <property type="evidence" value="ECO:0000250"/>
    <property type="project" value="UniProtKB"/>
</dbReference>
<dbReference type="GO" id="GO:0060088">
    <property type="term" value="P:auditory receptor cell stereocilium organization"/>
    <property type="evidence" value="ECO:0000266"/>
    <property type="project" value="RGD"/>
</dbReference>
<dbReference type="GO" id="GO:0007605">
    <property type="term" value="P:sensory perception of sound"/>
    <property type="evidence" value="ECO:0000250"/>
    <property type="project" value="UniProtKB"/>
</dbReference>
<dbReference type="GO" id="GO:0120045">
    <property type="term" value="P:stereocilium maintenance"/>
    <property type="evidence" value="ECO:0000250"/>
    <property type="project" value="UniProtKB"/>
</dbReference>
<dbReference type="InterPro" id="IPR025903">
    <property type="entry name" value="Phostensin/Taperin_N_dom"/>
</dbReference>
<dbReference type="InterPro" id="IPR025907">
    <property type="entry name" value="Phostensin/Taperin_PP1-bd_dom"/>
</dbReference>
<dbReference type="InterPro" id="IPR026671">
    <property type="entry name" value="PPP1R18/Tprn"/>
</dbReference>
<dbReference type="PANTHER" id="PTHR21685:SF1">
    <property type="entry name" value="TAPERIN"/>
    <property type="match status" value="1"/>
</dbReference>
<dbReference type="PANTHER" id="PTHR21685">
    <property type="entry name" value="TON-B BOX DOMAIN"/>
    <property type="match status" value="1"/>
</dbReference>
<dbReference type="Pfam" id="PF13914">
    <property type="entry name" value="Phostensin"/>
    <property type="match status" value="1"/>
</dbReference>
<dbReference type="Pfam" id="PF13916">
    <property type="entry name" value="Phostensin_N"/>
    <property type="match status" value="1"/>
</dbReference>
<sequence length="753" mass="80272">MAGLGRLDPGPRTVMPAWKREILERRRAKLAALSGGPGSGAAPDGPNERLVLAESLGPLSQNPFMRLESERRRGARPAQQLLELYCRVPGVRTIRADNILIIESAPGFPPAVPPASSIRAAEVVVYEEPQPGRVSRLLEKFDSPAAPRRRGSPERFRPALPQLPVAPASAATRAPTNRSLAPAPPVLPSQPAPPISPVPVAQRAGQRSACCEPAHPDGTAGPGARRSDFLQKTGSNSFTVHPRGLPGSAVNRSLSNGPMTQESPAGPANGLSGSPPVPGKWKPKVESKEPSLHPPPSPGTPSATPVGPPAFLAPSPASATPSQRQWVSSATSANDSFEIRPSSKPDMETIPIGDLQARALANLRVNSRNSFVLIPKRKAPGNYPSAAGRQFEEPKGEVGWASQSQGLGSQLVSTVDGAPALEKSSLAAEMQWAVREGGCPRPAISDTDKSVRRQRPASPPPFLPATTEAEPAEGLGVPGLTKNGQEPVRPGLPVTFIDEVDSEEAAFQEAKLPSSAVGVPSQYHLHPSTPGHTSELLNRGSNTFTVVPKRKPGTLQEPHLSQTNGQFQQGAEEQDADSLSGPHTTLENALKKRYPTVNEIEVIGGYLALQKSCLIKAGSSRKKMKISFNDKSLHTTFEYPSESSLAQEEAEEEEEEEEEEEGEDGEEEEVGPDSEKSFTVLLPRATFVSSVGPESSSGLSSYTPKHSMAFSKWQEQTLVQAPTEVELPPKEVMLTPASQNDLSDFRSEPALYF</sequence>
<accession>Q5XHX2</accession>